<organism>
    <name type="scientific">Neisseria meningitidis serogroup B (strain ATCC BAA-335 / MC58)</name>
    <dbReference type="NCBI Taxonomy" id="122586"/>
    <lineage>
        <taxon>Bacteria</taxon>
        <taxon>Pseudomonadati</taxon>
        <taxon>Pseudomonadota</taxon>
        <taxon>Betaproteobacteria</taxon>
        <taxon>Neisseriales</taxon>
        <taxon>Neisseriaceae</taxon>
        <taxon>Neisseria</taxon>
    </lineage>
</organism>
<comment type="catalytic activity">
    <reaction evidence="1">
        <text>tRNA(His) + L-histidine + ATP = L-histidyl-tRNA(His) + AMP + diphosphate + H(+)</text>
        <dbReference type="Rhea" id="RHEA:17313"/>
        <dbReference type="Rhea" id="RHEA-COMP:9665"/>
        <dbReference type="Rhea" id="RHEA-COMP:9689"/>
        <dbReference type="ChEBI" id="CHEBI:15378"/>
        <dbReference type="ChEBI" id="CHEBI:30616"/>
        <dbReference type="ChEBI" id="CHEBI:33019"/>
        <dbReference type="ChEBI" id="CHEBI:57595"/>
        <dbReference type="ChEBI" id="CHEBI:78442"/>
        <dbReference type="ChEBI" id="CHEBI:78527"/>
        <dbReference type="ChEBI" id="CHEBI:456215"/>
        <dbReference type="EC" id="6.1.1.21"/>
    </reaction>
</comment>
<comment type="subunit">
    <text evidence="1">Homodimer.</text>
</comment>
<comment type="subcellular location">
    <subcellularLocation>
        <location evidence="1">Cytoplasm</location>
    </subcellularLocation>
</comment>
<comment type="similarity">
    <text evidence="1">Belongs to the class-II aminoacyl-tRNA synthetase family.</text>
</comment>
<dbReference type="EC" id="6.1.1.21" evidence="1"/>
<dbReference type="EMBL" id="AE002098">
    <property type="protein sequence ID" value="AAF41265.1"/>
    <property type="molecule type" value="Genomic_DNA"/>
</dbReference>
<dbReference type="PIR" id="A81150">
    <property type="entry name" value="A81150"/>
</dbReference>
<dbReference type="RefSeq" id="NP_273895.1">
    <property type="nucleotide sequence ID" value="NC_003112.2"/>
</dbReference>
<dbReference type="RefSeq" id="WP_002225391.1">
    <property type="nucleotide sequence ID" value="NC_003112.2"/>
</dbReference>
<dbReference type="SMR" id="Q9JZX9"/>
<dbReference type="FunCoup" id="Q9JZX9">
    <property type="interactions" value="467"/>
</dbReference>
<dbReference type="STRING" id="122586.NMB0854"/>
<dbReference type="PaxDb" id="122586-NMB0854"/>
<dbReference type="KEGG" id="nme:NMB0854"/>
<dbReference type="PATRIC" id="fig|122586.8.peg.1068"/>
<dbReference type="HOGENOM" id="CLU_025113_1_1_4"/>
<dbReference type="InParanoid" id="Q9JZX9"/>
<dbReference type="OrthoDB" id="9800814at2"/>
<dbReference type="Proteomes" id="UP000000425">
    <property type="component" value="Chromosome"/>
</dbReference>
<dbReference type="GO" id="GO:0005737">
    <property type="term" value="C:cytoplasm"/>
    <property type="evidence" value="ECO:0007669"/>
    <property type="project" value="UniProtKB-SubCell"/>
</dbReference>
<dbReference type="GO" id="GO:0005524">
    <property type="term" value="F:ATP binding"/>
    <property type="evidence" value="ECO:0007669"/>
    <property type="project" value="UniProtKB-UniRule"/>
</dbReference>
<dbReference type="GO" id="GO:0004821">
    <property type="term" value="F:histidine-tRNA ligase activity"/>
    <property type="evidence" value="ECO:0000318"/>
    <property type="project" value="GO_Central"/>
</dbReference>
<dbReference type="GO" id="GO:0006427">
    <property type="term" value="P:histidyl-tRNA aminoacylation"/>
    <property type="evidence" value="ECO:0000318"/>
    <property type="project" value="GO_Central"/>
</dbReference>
<dbReference type="CDD" id="cd00773">
    <property type="entry name" value="HisRS-like_core"/>
    <property type="match status" value="1"/>
</dbReference>
<dbReference type="CDD" id="cd00859">
    <property type="entry name" value="HisRS_anticodon"/>
    <property type="match status" value="1"/>
</dbReference>
<dbReference type="FunFam" id="3.30.930.10:FF:000005">
    <property type="entry name" value="Histidine--tRNA ligase"/>
    <property type="match status" value="1"/>
</dbReference>
<dbReference type="Gene3D" id="3.40.50.800">
    <property type="entry name" value="Anticodon-binding domain"/>
    <property type="match status" value="1"/>
</dbReference>
<dbReference type="Gene3D" id="3.30.930.10">
    <property type="entry name" value="Bira Bifunctional Protein, Domain 2"/>
    <property type="match status" value="1"/>
</dbReference>
<dbReference type="HAMAP" id="MF_00127">
    <property type="entry name" value="His_tRNA_synth"/>
    <property type="match status" value="1"/>
</dbReference>
<dbReference type="InterPro" id="IPR006195">
    <property type="entry name" value="aa-tRNA-synth_II"/>
</dbReference>
<dbReference type="InterPro" id="IPR045864">
    <property type="entry name" value="aa-tRNA-synth_II/BPL/LPL"/>
</dbReference>
<dbReference type="InterPro" id="IPR004154">
    <property type="entry name" value="Anticodon-bd"/>
</dbReference>
<dbReference type="InterPro" id="IPR036621">
    <property type="entry name" value="Anticodon-bd_dom_sf"/>
</dbReference>
<dbReference type="InterPro" id="IPR015807">
    <property type="entry name" value="His-tRNA-ligase"/>
</dbReference>
<dbReference type="InterPro" id="IPR041715">
    <property type="entry name" value="HisRS-like_core"/>
</dbReference>
<dbReference type="InterPro" id="IPR004516">
    <property type="entry name" value="HisRS/HisZ"/>
</dbReference>
<dbReference type="InterPro" id="IPR033656">
    <property type="entry name" value="HisRS_anticodon"/>
</dbReference>
<dbReference type="NCBIfam" id="TIGR00442">
    <property type="entry name" value="hisS"/>
    <property type="match status" value="1"/>
</dbReference>
<dbReference type="PANTHER" id="PTHR43707:SF1">
    <property type="entry name" value="HISTIDINE--TRNA LIGASE, MITOCHONDRIAL-RELATED"/>
    <property type="match status" value="1"/>
</dbReference>
<dbReference type="PANTHER" id="PTHR43707">
    <property type="entry name" value="HISTIDYL-TRNA SYNTHETASE"/>
    <property type="match status" value="1"/>
</dbReference>
<dbReference type="Pfam" id="PF03129">
    <property type="entry name" value="HGTP_anticodon"/>
    <property type="match status" value="1"/>
</dbReference>
<dbReference type="Pfam" id="PF13393">
    <property type="entry name" value="tRNA-synt_His"/>
    <property type="match status" value="1"/>
</dbReference>
<dbReference type="PIRSF" id="PIRSF001549">
    <property type="entry name" value="His-tRNA_synth"/>
    <property type="match status" value="1"/>
</dbReference>
<dbReference type="SUPFAM" id="SSF52954">
    <property type="entry name" value="Class II aaRS ABD-related"/>
    <property type="match status" value="1"/>
</dbReference>
<dbReference type="SUPFAM" id="SSF55681">
    <property type="entry name" value="Class II aaRS and biotin synthetases"/>
    <property type="match status" value="1"/>
</dbReference>
<dbReference type="PROSITE" id="PS50862">
    <property type="entry name" value="AA_TRNA_LIGASE_II"/>
    <property type="match status" value="1"/>
</dbReference>
<proteinExistence type="inferred from homology"/>
<gene>
    <name evidence="1" type="primary">hisS</name>
    <name type="ordered locus">NMB0854</name>
</gene>
<reference key="1">
    <citation type="journal article" date="2000" name="Science">
        <title>Complete genome sequence of Neisseria meningitidis serogroup B strain MC58.</title>
        <authorList>
            <person name="Tettelin H."/>
            <person name="Saunders N.J."/>
            <person name="Heidelberg J.F."/>
            <person name="Jeffries A.C."/>
            <person name="Nelson K.E."/>
            <person name="Eisen J.A."/>
            <person name="Ketchum K.A."/>
            <person name="Hood D.W."/>
            <person name="Peden J.F."/>
            <person name="Dodson R.J."/>
            <person name="Nelson W.C."/>
            <person name="Gwinn M.L."/>
            <person name="DeBoy R.T."/>
            <person name="Peterson J.D."/>
            <person name="Hickey E.K."/>
            <person name="Haft D.H."/>
            <person name="Salzberg S.L."/>
            <person name="White O."/>
            <person name="Fleischmann R.D."/>
            <person name="Dougherty B.A."/>
            <person name="Mason T.M."/>
            <person name="Ciecko A."/>
            <person name="Parksey D.S."/>
            <person name="Blair E."/>
            <person name="Cittone H."/>
            <person name="Clark E.B."/>
            <person name="Cotton M.D."/>
            <person name="Utterback T.R."/>
            <person name="Khouri H.M."/>
            <person name="Qin H."/>
            <person name="Vamathevan J.J."/>
            <person name="Gill J."/>
            <person name="Scarlato V."/>
            <person name="Masignani V."/>
            <person name="Pizza M."/>
            <person name="Grandi G."/>
            <person name="Sun L."/>
            <person name="Smith H.O."/>
            <person name="Fraser C.M."/>
            <person name="Moxon E.R."/>
            <person name="Rappuoli R."/>
            <person name="Venter J.C."/>
        </authorList>
    </citation>
    <scope>NUCLEOTIDE SEQUENCE [LARGE SCALE GENOMIC DNA]</scope>
    <source>
        <strain>ATCC BAA-335 / MC58</strain>
    </source>
</reference>
<feature type="chain" id="PRO_0000136210" description="Histidine--tRNA ligase">
    <location>
        <begin position="1"/>
        <end position="431"/>
    </location>
</feature>
<accession>Q9JZX9</accession>
<sequence length="431" mass="48465">MAQKIQSVKGMNDLLPVKQKDFKLTAAFWQAFEDTVGRWTRAYGYQQIRTPIVEQTGLFVRSIGEETDVVGKEMYTFSDSNDSLSLSLRPEGTASCLRAVVEHNLLYNSPQKLWYMGPMFRRERPQKGRYRQFHQVGIEALGFEGPDIDAEIIAMSADLWEKLGIREYLTLEINSLGNREERAAHRAALVEYLTRYEDKLDEDSKRRLKTNPLRVLDTKNPDLQEICNAAPRLVDYLGEDSQNHYVRFKAMLDGLGIQYIENPRLVRGLDYYNQTVFEWTTDKLGAQATVCGGGRYDGLIEELGGKPAPSIGFAMGIERLLLLVSEYGSLEVNAAPDVYAMHQGEGADLQVMKYAQALRAQGFNVMQHSGYQSLKAQMKKADNSGARFALIVAQDELANGTVTLKDMNGAHGQQTVAAEDLTPTLQQWKNA</sequence>
<evidence type="ECO:0000255" key="1">
    <source>
        <dbReference type="HAMAP-Rule" id="MF_00127"/>
    </source>
</evidence>
<keyword id="KW-0030">Aminoacyl-tRNA synthetase</keyword>
<keyword id="KW-0067">ATP-binding</keyword>
<keyword id="KW-0963">Cytoplasm</keyword>
<keyword id="KW-0436">Ligase</keyword>
<keyword id="KW-0547">Nucleotide-binding</keyword>
<keyword id="KW-0648">Protein biosynthesis</keyword>
<keyword id="KW-1185">Reference proteome</keyword>
<name>SYH_NEIMB</name>
<protein>
    <recommendedName>
        <fullName evidence="1">Histidine--tRNA ligase</fullName>
        <ecNumber evidence="1">6.1.1.21</ecNumber>
    </recommendedName>
    <alternativeName>
        <fullName evidence="1">Histidyl-tRNA synthetase</fullName>
        <shortName evidence="1">HisRS</shortName>
    </alternativeName>
</protein>